<dbReference type="EMBL" id="AE016827">
    <property type="protein sequence ID" value="AAU38952.1"/>
    <property type="molecule type" value="Genomic_DNA"/>
</dbReference>
<dbReference type="RefSeq" id="WP_011201490.1">
    <property type="nucleotide sequence ID" value="NC_006300.1"/>
</dbReference>
<dbReference type="SMR" id="Q65Q08"/>
<dbReference type="STRING" id="221988.MS2345"/>
<dbReference type="KEGG" id="msu:MS2345"/>
<dbReference type="eggNOG" id="COG0355">
    <property type="taxonomic scope" value="Bacteria"/>
</dbReference>
<dbReference type="HOGENOM" id="CLU_084338_2_0_6"/>
<dbReference type="OrthoDB" id="9791445at2"/>
<dbReference type="Proteomes" id="UP000000607">
    <property type="component" value="Chromosome"/>
</dbReference>
<dbReference type="GO" id="GO:0005886">
    <property type="term" value="C:plasma membrane"/>
    <property type="evidence" value="ECO:0007669"/>
    <property type="project" value="UniProtKB-SubCell"/>
</dbReference>
<dbReference type="GO" id="GO:0045259">
    <property type="term" value="C:proton-transporting ATP synthase complex"/>
    <property type="evidence" value="ECO:0007669"/>
    <property type="project" value="UniProtKB-KW"/>
</dbReference>
<dbReference type="GO" id="GO:0005524">
    <property type="term" value="F:ATP binding"/>
    <property type="evidence" value="ECO:0007669"/>
    <property type="project" value="UniProtKB-UniRule"/>
</dbReference>
<dbReference type="GO" id="GO:0046933">
    <property type="term" value="F:proton-transporting ATP synthase activity, rotational mechanism"/>
    <property type="evidence" value="ECO:0007669"/>
    <property type="project" value="UniProtKB-UniRule"/>
</dbReference>
<dbReference type="CDD" id="cd12152">
    <property type="entry name" value="F1-ATPase_delta"/>
    <property type="match status" value="1"/>
</dbReference>
<dbReference type="FunFam" id="2.60.15.10:FF:000001">
    <property type="entry name" value="ATP synthase epsilon chain"/>
    <property type="match status" value="1"/>
</dbReference>
<dbReference type="Gene3D" id="1.20.5.440">
    <property type="entry name" value="ATP synthase delta/epsilon subunit, C-terminal domain"/>
    <property type="match status" value="1"/>
</dbReference>
<dbReference type="Gene3D" id="2.60.15.10">
    <property type="entry name" value="F0F1 ATP synthase delta/epsilon subunit, N-terminal"/>
    <property type="match status" value="1"/>
</dbReference>
<dbReference type="HAMAP" id="MF_00530">
    <property type="entry name" value="ATP_synth_epsil_bac"/>
    <property type="match status" value="1"/>
</dbReference>
<dbReference type="InterPro" id="IPR036794">
    <property type="entry name" value="ATP_F1_dsu/esu_C_sf"/>
</dbReference>
<dbReference type="InterPro" id="IPR001469">
    <property type="entry name" value="ATP_synth_F1_dsu/esu"/>
</dbReference>
<dbReference type="InterPro" id="IPR020546">
    <property type="entry name" value="ATP_synth_F1_dsu/esu_N"/>
</dbReference>
<dbReference type="InterPro" id="IPR036771">
    <property type="entry name" value="ATPsynth_dsu/esu_N"/>
</dbReference>
<dbReference type="NCBIfam" id="TIGR01216">
    <property type="entry name" value="ATP_synt_epsi"/>
    <property type="match status" value="1"/>
</dbReference>
<dbReference type="NCBIfam" id="NF001847">
    <property type="entry name" value="PRK00571.1-4"/>
    <property type="match status" value="1"/>
</dbReference>
<dbReference type="PANTHER" id="PTHR13822">
    <property type="entry name" value="ATP SYNTHASE DELTA/EPSILON CHAIN"/>
    <property type="match status" value="1"/>
</dbReference>
<dbReference type="PANTHER" id="PTHR13822:SF10">
    <property type="entry name" value="ATP SYNTHASE EPSILON CHAIN, CHLOROPLASTIC"/>
    <property type="match status" value="1"/>
</dbReference>
<dbReference type="Pfam" id="PF02823">
    <property type="entry name" value="ATP-synt_DE_N"/>
    <property type="match status" value="1"/>
</dbReference>
<dbReference type="SUPFAM" id="SSF46604">
    <property type="entry name" value="Epsilon subunit of F1F0-ATP synthase C-terminal domain"/>
    <property type="match status" value="1"/>
</dbReference>
<dbReference type="SUPFAM" id="SSF51344">
    <property type="entry name" value="Epsilon subunit of F1F0-ATP synthase N-terminal domain"/>
    <property type="match status" value="1"/>
</dbReference>
<feature type="chain" id="PRO_0000188155" description="ATP synthase epsilon chain">
    <location>
        <begin position="1"/>
        <end position="142"/>
    </location>
</feature>
<protein>
    <recommendedName>
        <fullName evidence="1">ATP synthase epsilon chain</fullName>
    </recommendedName>
    <alternativeName>
        <fullName evidence="1">ATP synthase F1 sector epsilon subunit</fullName>
    </alternativeName>
    <alternativeName>
        <fullName evidence="1">F-ATPase epsilon subunit</fullName>
    </alternativeName>
</protein>
<accession>Q65Q08</accession>
<gene>
    <name evidence="1" type="primary">atpC</name>
    <name type="ordered locus">MS2345</name>
</gene>
<sequence>MTTFNLTIVSAENKIFEGAVKSVQATGIEGELGILAGHTPLLTAIKPGIVKFTYNDGIEEVIYVSGGFLEIQPNIVTVLADVAIRGSDLDQDRILAAKKKAEDNIVAKSGDLNHEMLTAKLSKELAKLRAYELTEKLVKNKR</sequence>
<proteinExistence type="inferred from homology"/>
<comment type="function">
    <text evidence="1">Produces ATP from ADP in the presence of a proton gradient across the membrane.</text>
</comment>
<comment type="subunit">
    <text>F-type ATPases have 2 components, CF(1) - the catalytic core - and CF(0) - the membrane proton channel. CF(1) has five subunits: alpha(3), beta(3), gamma(1), delta(1), epsilon(1). CF(0) has three main subunits: a, b and c.</text>
</comment>
<comment type="subcellular location">
    <subcellularLocation>
        <location evidence="1">Cell inner membrane</location>
        <topology evidence="1">Peripheral membrane protein</topology>
    </subcellularLocation>
</comment>
<comment type="similarity">
    <text evidence="1">Belongs to the ATPase epsilon chain family.</text>
</comment>
<organism>
    <name type="scientific">Mannheimia succiniciproducens (strain KCTC 0769BP / MBEL55E)</name>
    <dbReference type="NCBI Taxonomy" id="221988"/>
    <lineage>
        <taxon>Bacteria</taxon>
        <taxon>Pseudomonadati</taxon>
        <taxon>Pseudomonadota</taxon>
        <taxon>Gammaproteobacteria</taxon>
        <taxon>Pasteurellales</taxon>
        <taxon>Pasteurellaceae</taxon>
        <taxon>Basfia</taxon>
    </lineage>
</organism>
<keyword id="KW-0066">ATP synthesis</keyword>
<keyword id="KW-0997">Cell inner membrane</keyword>
<keyword id="KW-1003">Cell membrane</keyword>
<keyword id="KW-0139">CF(1)</keyword>
<keyword id="KW-0375">Hydrogen ion transport</keyword>
<keyword id="KW-0406">Ion transport</keyword>
<keyword id="KW-0472">Membrane</keyword>
<keyword id="KW-0813">Transport</keyword>
<name>ATPE_MANSM</name>
<reference key="1">
    <citation type="journal article" date="2004" name="Nat. Biotechnol.">
        <title>The genome sequence of the capnophilic rumen bacterium Mannheimia succiniciproducens.</title>
        <authorList>
            <person name="Hong S.H."/>
            <person name="Kim J.S."/>
            <person name="Lee S.Y."/>
            <person name="In Y.H."/>
            <person name="Choi S.S."/>
            <person name="Rih J.-K."/>
            <person name="Kim C.H."/>
            <person name="Jeong H."/>
            <person name="Hur C.G."/>
            <person name="Kim J.J."/>
        </authorList>
    </citation>
    <scope>NUCLEOTIDE SEQUENCE [LARGE SCALE GENOMIC DNA]</scope>
    <source>
        <strain>KCTC 0769BP / MBEL55E</strain>
    </source>
</reference>
<evidence type="ECO:0000255" key="1">
    <source>
        <dbReference type="HAMAP-Rule" id="MF_00530"/>
    </source>
</evidence>